<reference key="1">
    <citation type="submission" date="2005-08" db="EMBL/GenBank/DDBJ databases">
        <title>Complete sequence of chromosome 1 of Synechococcus elongatus PCC 7942.</title>
        <authorList>
            <consortium name="US DOE Joint Genome Institute"/>
            <person name="Copeland A."/>
            <person name="Lucas S."/>
            <person name="Lapidus A."/>
            <person name="Barry K."/>
            <person name="Detter J.C."/>
            <person name="Glavina T."/>
            <person name="Hammon N."/>
            <person name="Israni S."/>
            <person name="Pitluck S."/>
            <person name="Schmutz J."/>
            <person name="Larimer F."/>
            <person name="Land M."/>
            <person name="Kyrpides N."/>
            <person name="Lykidis A."/>
            <person name="Golden S."/>
            <person name="Richardson P."/>
        </authorList>
    </citation>
    <scope>NUCLEOTIDE SEQUENCE [LARGE SCALE GENOMIC DNA]</scope>
    <source>
        <strain>ATCC 33912 / PCC 7942 / FACHB-805</strain>
    </source>
</reference>
<protein>
    <recommendedName>
        <fullName evidence="1">Large ribosomal subunit protein uL16</fullName>
    </recommendedName>
    <alternativeName>
        <fullName evidence="3">50S ribosomal protein L16</fullName>
    </alternativeName>
</protein>
<dbReference type="EMBL" id="CP000100">
    <property type="protein sequence ID" value="ABB58255.1"/>
    <property type="molecule type" value="Genomic_DNA"/>
</dbReference>
<dbReference type="RefSeq" id="WP_011244182.1">
    <property type="nucleotide sequence ID" value="NZ_JACJTX010000001.1"/>
</dbReference>
<dbReference type="SMR" id="Q31L14"/>
<dbReference type="STRING" id="1140.Synpcc7942_2225"/>
<dbReference type="PaxDb" id="1140-Synpcc7942_2225"/>
<dbReference type="GeneID" id="72431108"/>
<dbReference type="KEGG" id="syf:Synpcc7942_2225"/>
<dbReference type="eggNOG" id="COG0197">
    <property type="taxonomic scope" value="Bacteria"/>
</dbReference>
<dbReference type="HOGENOM" id="CLU_078858_2_1_3"/>
<dbReference type="OrthoDB" id="9802589at2"/>
<dbReference type="BioCyc" id="SYNEL:SYNPCC7942_2225-MONOMER"/>
<dbReference type="Proteomes" id="UP000889800">
    <property type="component" value="Chromosome"/>
</dbReference>
<dbReference type="GO" id="GO:1990904">
    <property type="term" value="C:ribonucleoprotein complex"/>
    <property type="evidence" value="ECO:0007669"/>
    <property type="project" value="UniProtKB-KW"/>
</dbReference>
<dbReference type="GO" id="GO:0005840">
    <property type="term" value="C:ribosome"/>
    <property type="evidence" value="ECO:0007669"/>
    <property type="project" value="UniProtKB-KW"/>
</dbReference>
<dbReference type="GO" id="GO:0019843">
    <property type="term" value="F:rRNA binding"/>
    <property type="evidence" value="ECO:0007669"/>
    <property type="project" value="UniProtKB-UniRule"/>
</dbReference>
<dbReference type="GO" id="GO:0003735">
    <property type="term" value="F:structural constituent of ribosome"/>
    <property type="evidence" value="ECO:0007669"/>
    <property type="project" value="InterPro"/>
</dbReference>
<dbReference type="GO" id="GO:0000049">
    <property type="term" value="F:tRNA binding"/>
    <property type="evidence" value="ECO:0007669"/>
    <property type="project" value="UniProtKB-KW"/>
</dbReference>
<dbReference type="GO" id="GO:0006412">
    <property type="term" value="P:translation"/>
    <property type="evidence" value="ECO:0007669"/>
    <property type="project" value="UniProtKB-UniRule"/>
</dbReference>
<dbReference type="CDD" id="cd01433">
    <property type="entry name" value="Ribosomal_L16_L10e"/>
    <property type="match status" value="1"/>
</dbReference>
<dbReference type="FunFam" id="3.90.1170.10:FF:000001">
    <property type="entry name" value="50S ribosomal protein L16"/>
    <property type="match status" value="1"/>
</dbReference>
<dbReference type="Gene3D" id="3.90.1170.10">
    <property type="entry name" value="Ribosomal protein L10e/L16"/>
    <property type="match status" value="1"/>
</dbReference>
<dbReference type="HAMAP" id="MF_01342">
    <property type="entry name" value="Ribosomal_uL16"/>
    <property type="match status" value="1"/>
</dbReference>
<dbReference type="InterPro" id="IPR047873">
    <property type="entry name" value="Ribosomal_uL16"/>
</dbReference>
<dbReference type="InterPro" id="IPR000114">
    <property type="entry name" value="Ribosomal_uL16_bact-type"/>
</dbReference>
<dbReference type="InterPro" id="IPR020798">
    <property type="entry name" value="Ribosomal_uL16_CS"/>
</dbReference>
<dbReference type="InterPro" id="IPR016180">
    <property type="entry name" value="Ribosomal_uL16_dom"/>
</dbReference>
<dbReference type="InterPro" id="IPR036920">
    <property type="entry name" value="Ribosomal_uL16_sf"/>
</dbReference>
<dbReference type="NCBIfam" id="TIGR01164">
    <property type="entry name" value="rplP_bact"/>
    <property type="match status" value="1"/>
</dbReference>
<dbReference type="PANTHER" id="PTHR12220">
    <property type="entry name" value="50S/60S RIBOSOMAL PROTEIN L16"/>
    <property type="match status" value="1"/>
</dbReference>
<dbReference type="PANTHER" id="PTHR12220:SF13">
    <property type="entry name" value="LARGE RIBOSOMAL SUBUNIT PROTEIN UL16M"/>
    <property type="match status" value="1"/>
</dbReference>
<dbReference type="Pfam" id="PF00252">
    <property type="entry name" value="Ribosomal_L16"/>
    <property type="match status" value="1"/>
</dbReference>
<dbReference type="PRINTS" id="PR00060">
    <property type="entry name" value="RIBOSOMALL16"/>
</dbReference>
<dbReference type="SUPFAM" id="SSF54686">
    <property type="entry name" value="Ribosomal protein L16p/L10e"/>
    <property type="match status" value="1"/>
</dbReference>
<dbReference type="PROSITE" id="PS00586">
    <property type="entry name" value="RIBOSOMAL_L16_1"/>
    <property type="match status" value="1"/>
</dbReference>
<dbReference type="PROSITE" id="PS00701">
    <property type="entry name" value="RIBOSOMAL_L16_2"/>
    <property type="match status" value="1"/>
</dbReference>
<keyword id="KW-1185">Reference proteome</keyword>
<keyword id="KW-0687">Ribonucleoprotein</keyword>
<keyword id="KW-0689">Ribosomal protein</keyword>
<keyword id="KW-0694">RNA-binding</keyword>
<keyword id="KW-0699">rRNA-binding</keyword>
<keyword id="KW-0820">tRNA-binding</keyword>
<organism>
    <name type="scientific">Synechococcus elongatus (strain ATCC 33912 / PCC 7942 / FACHB-805)</name>
    <name type="common">Anacystis nidulans R2</name>
    <dbReference type="NCBI Taxonomy" id="1140"/>
    <lineage>
        <taxon>Bacteria</taxon>
        <taxon>Bacillati</taxon>
        <taxon>Cyanobacteriota</taxon>
        <taxon>Cyanophyceae</taxon>
        <taxon>Synechococcales</taxon>
        <taxon>Synechococcaceae</taxon>
        <taxon>Synechococcus</taxon>
    </lineage>
</organism>
<name>RL16_SYNE7</name>
<evidence type="ECO:0000255" key="1">
    <source>
        <dbReference type="HAMAP-Rule" id="MF_01342"/>
    </source>
</evidence>
<evidence type="ECO:0000256" key="2">
    <source>
        <dbReference type="SAM" id="MobiDB-lite"/>
    </source>
</evidence>
<evidence type="ECO:0000305" key="3"/>
<feature type="chain" id="PRO_0000251685" description="Large ribosomal subunit protein uL16">
    <location>
        <begin position="1"/>
        <end position="142"/>
    </location>
</feature>
<feature type="region of interest" description="Disordered" evidence="2">
    <location>
        <begin position="1"/>
        <end position="22"/>
    </location>
</feature>
<feature type="compositionally biased region" description="Basic residues" evidence="2">
    <location>
        <begin position="1"/>
        <end position="14"/>
    </location>
</feature>
<sequence>MLSPRRTKFRKQQRGRMTGKATRGNTLAFGNFGLQALECSWITARQIEASRRAMTRYTRRGGKIWIRIFPDKPITMRPAETRMGSGKGNPEFWVAVVKPGRVLFEIGGEVAEETAREAMRLASHKLPIKTKFITRDSEAQEA</sequence>
<gene>
    <name evidence="1" type="primary">rplP</name>
    <name evidence="1" type="synonym">rpl16</name>
    <name type="ordered locus">Synpcc7942_2225</name>
</gene>
<comment type="function">
    <text evidence="1">Binds 23S rRNA and is also seen to make contacts with the A and possibly P site tRNAs.</text>
</comment>
<comment type="subunit">
    <text evidence="1">Part of the 50S ribosomal subunit.</text>
</comment>
<comment type="similarity">
    <text evidence="1">Belongs to the universal ribosomal protein uL16 family.</text>
</comment>
<accession>Q31L14</accession>
<proteinExistence type="inferred from homology"/>